<comment type="function">
    <text evidence="1">Plays a major role in protein secretion by helping the post-translocational extracellular folding of several secreted proteins.</text>
</comment>
<comment type="catalytic activity">
    <reaction evidence="1">
        <text>[protein]-peptidylproline (omega=180) = [protein]-peptidylproline (omega=0)</text>
        <dbReference type="Rhea" id="RHEA:16237"/>
        <dbReference type="Rhea" id="RHEA-COMP:10747"/>
        <dbReference type="Rhea" id="RHEA-COMP:10748"/>
        <dbReference type="ChEBI" id="CHEBI:83833"/>
        <dbReference type="ChEBI" id="CHEBI:83834"/>
        <dbReference type="EC" id="5.2.1.8"/>
    </reaction>
</comment>
<comment type="subcellular location">
    <subcellularLocation>
        <location evidence="1">Cell membrane</location>
        <topology evidence="1">Lipid-anchor</topology>
    </subcellularLocation>
</comment>
<comment type="similarity">
    <text evidence="1">Belongs to the PrsA family.</text>
</comment>
<feature type="signal peptide" evidence="1">
    <location>
        <begin position="1"/>
        <end position="20"/>
    </location>
</feature>
<feature type="chain" id="PRO_1000085054" description="Foldase protein PrsA">
    <location>
        <begin position="21"/>
        <end position="320"/>
    </location>
</feature>
<feature type="domain" description="PpiC" evidence="1">
    <location>
        <begin position="139"/>
        <end position="245"/>
    </location>
</feature>
<feature type="region of interest" description="Disordered" evidence="2">
    <location>
        <begin position="159"/>
        <end position="198"/>
    </location>
</feature>
<feature type="lipid moiety-binding region" description="N-palmitoyl cysteine" evidence="1">
    <location>
        <position position="21"/>
    </location>
</feature>
<feature type="lipid moiety-binding region" description="S-diacylglycerol cysteine" evidence="1">
    <location>
        <position position="21"/>
    </location>
</feature>
<evidence type="ECO:0000255" key="1">
    <source>
        <dbReference type="HAMAP-Rule" id="MF_01145"/>
    </source>
</evidence>
<evidence type="ECO:0000256" key="2">
    <source>
        <dbReference type="SAM" id="MobiDB-lite"/>
    </source>
</evidence>
<dbReference type="EC" id="5.2.1.8" evidence="1"/>
<dbReference type="EMBL" id="AP009324">
    <property type="protein sequence ID" value="BAF78709.1"/>
    <property type="molecule type" value="Genomic_DNA"/>
</dbReference>
<dbReference type="RefSeq" id="WP_000782121.1">
    <property type="nucleotide sequence ID" value="NC_009782.1"/>
</dbReference>
<dbReference type="BMRB" id="A7X3U8"/>
<dbReference type="SMR" id="A7X3U8"/>
<dbReference type="KEGG" id="saw:SAHV_1826"/>
<dbReference type="HOGENOM" id="CLU_034646_6_2_9"/>
<dbReference type="GO" id="GO:0005886">
    <property type="term" value="C:plasma membrane"/>
    <property type="evidence" value="ECO:0007669"/>
    <property type="project" value="UniProtKB-SubCell"/>
</dbReference>
<dbReference type="GO" id="GO:0003755">
    <property type="term" value="F:peptidyl-prolyl cis-trans isomerase activity"/>
    <property type="evidence" value="ECO:0007669"/>
    <property type="project" value="UniProtKB-UniRule"/>
</dbReference>
<dbReference type="GO" id="GO:0006457">
    <property type="term" value="P:protein folding"/>
    <property type="evidence" value="ECO:0007669"/>
    <property type="project" value="UniProtKB-UniRule"/>
</dbReference>
<dbReference type="Gene3D" id="3.10.50.40">
    <property type="match status" value="1"/>
</dbReference>
<dbReference type="Gene3D" id="1.10.4030.10">
    <property type="entry name" value="Porin chaperone SurA, peptide-binding domain"/>
    <property type="match status" value="1"/>
</dbReference>
<dbReference type="HAMAP" id="MF_01145">
    <property type="entry name" value="Foldase_PrsA"/>
    <property type="match status" value="1"/>
</dbReference>
<dbReference type="InterPro" id="IPR023059">
    <property type="entry name" value="Foldase_PrsA"/>
</dbReference>
<dbReference type="InterPro" id="IPR046357">
    <property type="entry name" value="PPIase_dom_sf"/>
</dbReference>
<dbReference type="InterPro" id="IPR000297">
    <property type="entry name" value="PPIase_PpiC"/>
</dbReference>
<dbReference type="InterPro" id="IPR050245">
    <property type="entry name" value="PrsA_foldase"/>
</dbReference>
<dbReference type="InterPro" id="IPR027304">
    <property type="entry name" value="Trigger_fact/SurA_dom_sf"/>
</dbReference>
<dbReference type="PANTHER" id="PTHR47245:SF1">
    <property type="entry name" value="FOLDASE PROTEIN PRSA"/>
    <property type="match status" value="1"/>
</dbReference>
<dbReference type="PANTHER" id="PTHR47245">
    <property type="entry name" value="PEPTIDYLPROLYL ISOMERASE"/>
    <property type="match status" value="1"/>
</dbReference>
<dbReference type="Pfam" id="PF00639">
    <property type="entry name" value="Rotamase"/>
    <property type="match status" value="1"/>
</dbReference>
<dbReference type="SUPFAM" id="SSF54534">
    <property type="entry name" value="FKBP-like"/>
    <property type="match status" value="1"/>
</dbReference>
<dbReference type="SUPFAM" id="SSF109998">
    <property type="entry name" value="Triger factor/SurA peptide-binding domain-like"/>
    <property type="match status" value="1"/>
</dbReference>
<dbReference type="PROSITE" id="PS50198">
    <property type="entry name" value="PPIC_PPIASE_2"/>
    <property type="match status" value="1"/>
</dbReference>
<dbReference type="PROSITE" id="PS51257">
    <property type="entry name" value="PROKAR_LIPOPROTEIN"/>
    <property type="match status" value="1"/>
</dbReference>
<keyword id="KW-1003">Cell membrane</keyword>
<keyword id="KW-0413">Isomerase</keyword>
<keyword id="KW-0449">Lipoprotein</keyword>
<keyword id="KW-0472">Membrane</keyword>
<keyword id="KW-0564">Palmitate</keyword>
<keyword id="KW-0697">Rotamase</keyword>
<keyword id="KW-0732">Signal</keyword>
<gene>
    <name evidence="1" type="primary">prsA</name>
    <name type="ordered locus">SAHV_1826</name>
</gene>
<sequence length="320" mass="35638">MKMINKLIVPVTASALLLGACGASATDSKENTLISSKAGDVTVADTMKKIGKDQIANASFTEMLNKILADKYKNKVNDKKIDEQIEKMQKQYGGKDKFEKALQQQGLTADKYKENLRTAAYHKELLSDKIKISDSEIKEDSKKASHILIKVKSKKSDKEGLDDKEAKQKAEEIQKEVSKDPSKFGEIAKKESMDTGSAKKDGELGYVLKGQTDKDFEKALFKLKDGEVSEVVKSSFGYHIIKADKPTDFNSEKQSLKEKLVDQKVQKNPKLLTDAYKDLLKEYDVDFKDRDIKSVVEDKILNPEKLKQGGAQGGQSGMSQ</sequence>
<accession>A7X3U8</accession>
<reference key="1">
    <citation type="journal article" date="2008" name="Antimicrob. Agents Chemother.">
        <title>Mutated response regulator graR is responsible for phenotypic conversion of Staphylococcus aureus from heterogeneous vancomycin-intermediate resistance to vancomycin-intermediate resistance.</title>
        <authorList>
            <person name="Neoh H.-M."/>
            <person name="Cui L."/>
            <person name="Yuzawa H."/>
            <person name="Takeuchi F."/>
            <person name="Matsuo M."/>
            <person name="Hiramatsu K."/>
        </authorList>
    </citation>
    <scope>NUCLEOTIDE SEQUENCE [LARGE SCALE GENOMIC DNA]</scope>
    <source>
        <strain>Mu3 / ATCC 700698</strain>
    </source>
</reference>
<proteinExistence type="inferred from homology"/>
<name>PRSA_STAA1</name>
<organism>
    <name type="scientific">Staphylococcus aureus (strain Mu3 / ATCC 700698)</name>
    <dbReference type="NCBI Taxonomy" id="418127"/>
    <lineage>
        <taxon>Bacteria</taxon>
        <taxon>Bacillati</taxon>
        <taxon>Bacillota</taxon>
        <taxon>Bacilli</taxon>
        <taxon>Bacillales</taxon>
        <taxon>Staphylococcaceae</taxon>
        <taxon>Staphylococcus</taxon>
    </lineage>
</organism>
<protein>
    <recommendedName>
        <fullName evidence="1">Foldase protein PrsA</fullName>
        <ecNumber evidence="1">5.2.1.8</ecNumber>
    </recommendedName>
</protein>